<sequence length="1089" mass="119771">MEVTSTTFISTTRSSKYLTLTSYSPVILPASTLRRDFLGCCHSLRPSPHLRTRAGKRNSRRSSIRSPRLVVRASIDSGLILIVVAVTAFSAIAFAYCQSTFRKRKSSDEVATVHGGKNSAENRREIHGDIHEGNPVEINVGFRKVEEESVNLLEEEKAHQIHEVAVMDYDSVSAEDSQFAVASVTTVATAHTLIDESFSSSIVNGSVALESATFGVKTPEKQVGNSEDQKGLEHDFSQAVVGIHSIASPQVVDDTRALEYEYNGLLQKPLEYSIFAESKREEIHTFYGSNHSSAKSSRLPSLKAVSPAVTSATNSLFLDHKNNGVIDTQFPGQSSGQATGDVQEENLVAHSNGGVSHIRKDVKGDWKFPSDGKHVGHQIDESMPQFPARNFELHNSNGRSPETSDAYNRLLRDGRIKDCISLLEDLDQRDLLDMDKIYHASFFKACKKQRAVKEAFRFTKLILNPTMSTFNMLMSVCASSQDIEGARGVLRLVQESGMTADCKLYTTLISSCAKSGKVDAMFEVFHQMSNSGVEANLHTFGALIDGCARAGQVAKAFGAYGILRSKNVKPDRVVFNALISACGQSGAVDRAFDVLAEMKAETHPIDPDHISIGALMKACCNAGQVERAKEVYQMIHKYGIRGTPEVYTIAVNSCSKSGDWDFACSIYKDMKEKDVTPDEVFFSALIDVAGHAKMLDEAFGILQDAKSQGIRLGTISYSSLMGACCNAKDWKKALELYEKIKSIKLRPTISTMNALITALCEGNQLPKAMEYLDEIKTLGLKPNTITYSMLMLASERKDDFEVSFKLLSQAKGDGVSPNLIMCRCITSLCKRRFEKACAGGEPVVSFKSGRPQIENKWTSMALMVYRETISGGTVPTTEVVSQVLGCLQLPHDAALRDRLISTLGINISSQKQHNIFPLVDGFGEYDPRAFSLLEEATSLGVLPSVSFNKIPLFFDTTELPKNVAEVYLLTIFKGLKHRLAAGAKIPHINLIISIQEKEIRTPEGEKTIDLTGRVGQEIGALLRRLDIPYHRKDSRLRINGVSLKNWFQPKLDSPFSGGKPGDLRSSQVPLGNQISRQQRSIRLGNLSLE</sequence>
<evidence type="ECO:0000255" key="1"/>
<evidence type="ECO:0000269" key="2">
    <source>
    </source>
</evidence>
<evidence type="ECO:0000269" key="3">
    <source>
    </source>
</evidence>
<evidence type="ECO:0000305" key="4"/>
<accession>Q0WLC6</accession>
<accession>Q0WVK9</accession>
<accession>Q6NLP9</accession>
<accession>Q9SW51</accession>
<accession>Q9SW52</accession>
<reference key="1">
    <citation type="journal article" date="1999" name="Nature">
        <title>Sequence and analysis of chromosome 4 of the plant Arabidopsis thaliana.</title>
        <authorList>
            <person name="Mayer K.F.X."/>
            <person name="Schueller C."/>
            <person name="Wambutt R."/>
            <person name="Murphy G."/>
            <person name="Volckaert G."/>
            <person name="Pohl T."/>
            <person name="Duesterhoeft A."/>
            <person name="Stiekema W."/>
            <person name="Entian K.-D."/>
            <person name="Terryn N."/>
            <person name="Harris B."/>
            <person name="Ansorge W."/>
            <person name="Brandt P."/>
            <person name="Grivell L.A."/>
            <person name="Rieger M."/>
            <person name="Weichselgartner M."/>
            <person name="de Simone V."/>
            <person name="Obermaier B."/>
            <person name="Mache R."/>
            <person name="Mueller M."/>
            <person name="Kreis M."/>
            <person name="Delseny M."/>
            <person name="Puigdomenech P."/>
            <person name="Watson M."/>
            <person name="Schmidtheini T."/>
            <person name="Reichert B."/>
            <person name="Portetelle D."/>
            <person name="Perez-Alonso M."/>
            <person name="Boutry M."/>
            <person name="Bancroft I."/>
            <person name="Vos P."/>
            <person name="Hoheisel J."/>
            <person name="Zimmermann W."/>
            <person name="Wedler H."/>
            <person name="Ridley P."/>
            <person name="Langham S.-A."/>
            <person name="McCullagh B."/>
            <person name="Bilham L."/>
            <person name="Robben J."/>
            <person name="van der Schueren J."/>
            <person name="Grymonprez B."/>
            <person name="Chuang Y.-J."/>
            <person name="Vandenbussche F."/>
            <person name="Braeken M."/>
            <person name="Weltjens I."/>
            <person name="Voet M."/>
            <person name="Bastiaens I."/>
            <person name="Aert R."/>
            <person name="Defoor E."/>
            <person name="Weitzenegger T."/>
            <person name="Bothe G."/>
            <person name="Ramsperger U."/>
            <person name="Hilbert H."/>
            <person name="Braun M."/>
            <person name="Holzer E."/>
            <person name="Brandt A."/>
            <person name="Peters S."/>
            <person name="van Staveren M."/>
            <person name="Dirkse W."/>
            <person name="Mooijman P."/>
            <person name="Klein Lankhorst R."/>
            <person name="Rose M."/>
            <person name="Hauf J."/>
            <person name="Koetter P."/>
            <person name="Berneiser S."/>
            <person name="Hempel S."/>
            <person name="Feldpausch M."/>
            <person name="Lamberth S."/>
            <person name="Van den Daele H."/>
            <person name="De Keyser A."/>
            <person name="Buysshaert C."/>
            <person name="Gielen J."/>
            <person name="Villarroel R."/>
            <person name="De Clercq R."/>
            <person name="van Montagu M."/>
            <person name="Rogers J."/>
            <person name="Cronin A."/>
            <person name="Quail M.A."/>
            <person name="Bray-Allen S."/>
            <person name="Clark L."/>
            <person name="Doggett J."/>
            <person name="Hall S."/>
            <person name="Kay M."/>
            <person name="Lennard N."/>
            <person name="McLay K."/>
            <person name="Mayes R."/>
            <person name="Pettett A."/>
            <person name="Rajandream M.A."/>
            <person name="Lyne M."/>
            <person name="Benes V."/>
            <person name="Rechmann S."/>
            <person name="Borkova D."/>
            <person name="Bloecker H."/>
            <person name="Scharfe M."/>
            <person name="Grimm M."/>
            <person name="Loehnert T.-H."/>
            <person name="Dose S."/>
            <person name="de Haan M."/>
            <person name="Maarse A.C."/>
            <person name="Schaefer M."/>
            <person name="Mueller-Auer S."/>
            <person name="Gabel C."/>
            <person name="Fuchs M."/>
            <person name="Fartmann B."/>
            <person name="Granderath K."/>
            <person name="Dauner D."/>
            <person name="Herzl A."/>
            <person name="Neumann S."/>
            <person name="Argiriou A."/>
            <person name="Vitale D."/>
            <person name="Liguori R."/>
            <person name="Piravandi E."/>
            <person name="Massenet O."/>
            <person name="Quigley F."/>
            <person name="Clabauld G."/>
            <person name="Muendlein A."/>
            <person name="Felber R."/>
            <person name="Schnabl S."/>
            <person name="Hiller R."/>
            <person name="Schmidt W."/>
            <person name="Lecharny A."/>
            <person name="Aubourg S."/>
            <person name="Chefdor F."/>
            <person name="Cooke R."/>
            <person name="Berger C."/>
            <person name="Monfort A."/>
            <person name="Casacuberta E."/>
            <person name="Gibbons T."/>
            <person name="Weber N."/>
            <person name="Vandenbol M."/>
            <person name="Bargues M."/>
            <person name="Terol J."/>
            <person name="Torres A."/>
            <person name="Perez-Perez A."/>
            <person name="Purnelle B."/>
            <person name="Bent E."/>
            <person name="Johnson S."/>
            <person name="Tacon D."/>
            <person name="Jesse T."/>
            <person name="Heijnen L."/>
            <person name="Schwarz S."/>
            <person name="Scholler P."/>
            <person name="Heber S."/>
            <person name="Francs P."/>
            <person name="Bielke C."/>
            <person name="Frishman D."/>
            <person name="Haase D."/>
            <person name="Lemcke K."/>
            <person name="Mewes H.-W."/>
            <person name="Stocker S."/>
            <person name="Zaccaria P."/>
            <person name="Bevan M."/>
            <person name="Wilson R.K."/>
            <person name="de la Bastide M."/>
            <person name="Habermann K."/>
            <person name="Parnell L."/>
            <person name="Dedhia N."/>
            <person name="Gnoj L."/>
            <person name="Schutz K."/>
            <person name="Huang E."/>
            <person name="Spiegel L."/>
            <person name="Sekhon M."/>
            <person name="Murray J."/>
            <person name="Sheet P."/>
            <person name="Cordes M."/>
            <person name="Abu-Threideh J."/>
            <person name="Stoneking T."/>
            <person name="Kalicki J."/>
            <person name="Graves T."/>
            <person name="Harmon G."/>
            <person name="Edwards J."/>
            <person name="Latreille P."/>
            <person name="Courtney L."/>
            <person name="Cloud J."/>
            <person name="Abbott A."/>
            <person name="Scott K."/>
            <person name="Johnson D."/>
            <person name="Minx P."/>
            <person name="Bentley D."/>
            <person name="Fulton B."/>
            <person name="Miller N."/>
            <person name="Greco T."/>
            <person name="Kemp K."/>
            <person name="Kramer J."/>
            <person name="Fulton L."/>
            <person name="Mardis E."/>
            <person name="Dante M."/>
            <person name="Pepin K."/>
            <person name="Hillier L.W."/>
            <person name="Nelson J."/>
            <person name="Spieth J."/>
            <person name="Ryan E."/>
            <person name="Andrews S."/>
            <person name="Geisel C."/>
            <person name="Layman D."/>
            <person name="Du H."/>
            <person name="Ali J."/>
            <person name="Berghoff A."/>
            <person name="Jones K."/>
            <person name="Drone K."/>
            <person name="Cotton M."/>
            <person name="Joshu C."/>
            <person name="Antonoiu B."/>
            <person name="Zidanic M."/>
            <person name="Strong C."/>
            <person name="Sun H."/>
            <person name="Lamar B."/>
            <person name="Yordan C."/>
            <person name="Ma P."/>
            <person name="Zhong J."/>
            <person name="Preston R."/>
            <person name="Vil D."/>
            <person name="Shekher M."/>
            <person name="Matero A."/>
            <person name="Shah R."/>
            <person name="Swaby I.K."/>
            <person name="O'Shaughnessy A."/>
            <person name="Rodriguez M."/>
            <person name="Hoffman J."/>
            <person name="Till S."/>
            <person name="Granat S."/>
            <person name="Shohdy N."/>
            <person name="Hasegawa A."/>
            <person name="Hameed A."/>
            <person name="Lodhi M."/>
            <person name="Johnson A."/>
            <person name="Chen E."/>
            <person name="Marra M.A."/>
            <person name="Martienssen R."/>
            <person name="McCombie W.R."/>
        </authorList>
    </citation>
    <scope>NUCLEOTIDE SEQUENCE [LARGE SCALE GENOMIC DNA]</scope>
    <source>
        <strain>cv. Columbia</strain>
    </source>
</reference>
<reference key="2">
    <citation type="journal article" date="2017" name="Plant J.">
        <title>Araport11: a complete reannotation of the Arabidopsis thaliana reference genome.</title>
        <authorList>
            <person name="Cheng C.Y."/>
            <person name="Krishnakumar V."/>
            <person name="Chan A.P."/>
            <person name="Thibaud-Nissen F."/>
            <person name="Schobel S."/>
            <person name="Town C.D."/>
        </authorList>
    </citation>
    <scope>GENOME REANNOTATION</scope>
    <source>
        <strain>cv. Columbia</strain>
    </source>
</reference>
<reference key="3">
    <citation type="submission" date="2006-07" db="EMBL/GenBank/DDBJ databases">
        <title>Large-scale analysis of RIKEN Arabidopsis full-length (RAFL) cDNAs.</title>
        <authorList>
            <person name="Totoki Y."/>
            <person name="Seki M."/>
            <person name="Ishida J."/>
            <person name="Nakajima M."/>
            <person name="Enju A."/>
            <person name="Kamiya A."/>
            <person name="Narusaka M."/>
            <person name="Shin-i T."/>
            <person name="Nakagawa M."/>
            <person name="Sakamoto N."/>
            <person name="Oishi K."/>
            <person name="Kohara Y."/>
            <person name="Kobayashi M."/>
            <person name="Toyoda A."/>
            <person name="Sakaki Y."/>
            <person name="Sakurai T."/>
            <person name="Iida K."/>
            <person name="Akiyama K."/>
            <person name="Satou M."/>
            <person name="Toyoda T."/>
            <person name="Konagaya A."/>
            <person name="Carninci P."/>
            <person name="Kawai J."/>
            <person name="Hayashizaki Y."/>
            <person name="Shinozaki K."/>
        </authorList>
    </citation>
    <scope>NUCLEOTIDE SEQUENCE [LARGE SCALE MRNA]</scope>
    <source>
        <strain>cv. Columbia</strain>
    </source>
</reference>
<reference key="4">
    <citation type="submission" date="2004-03" db="EMBL/GenBank/DDBJ databases">
        <title>Arabidopsis ORF clones.</title>
        <authorList>
            <person name="Cheuk R.F."/>
            <person name="Chen H."/>
            <person name="Kim C.J."/>
            <person name="Shinn P."/>
            <person name="Carninci P."/>
            <person name="Hayashizaki Y."/>
            <person name="Ishida J."/>
            <person name="Kamiya A."/>
            <person name="Kawai J."/>
            <person name="Narusaka M."/>
            <person name="Sakurai T."/>
            <person name="Satou M."/>
            <person name="Seki M."/>
            <person name="Shinozaki K."/>
            <person name="Ecker J.R."/>
        </authorList>
    </citation>
    <scope>NUCLEOTIDE SEQUENCE [LARGE SCALE MRNA] OF 769-1089</scope>
    <source>
        <strain>cv. Columbia</strain>
    </source>
</reference>
<reference key="5">
    <citation type="journal article" date="2004" name="Plant Cell">
        <title>Genome-wide analysis of Arabidopsis pentatricopeptide repeat proteins reveals their essential role in organelle biogenesis.</title>
        <authorList>
            <person name="Lurin C."/>
            <person name="Andres C."/>
            <person name="Aubourg S."/>
            <person name="Bellaoui M."/>
            <person name="Bitton F."/>
            <person name="Bruyere C."/>
            <person name="Caboche M."/>
            <person name="Debast C."/>
            <person name="Gualberto J."/>
            <person name="Hoffmann B."/>
            <person name="Lecharny A."/>
            <person name="Le Ret M."/>
            <person name="Martin-Magniette M.-L."/>
            <person name="Mireau H."/>
            <person name="Peeters N."/>
            <person name="Renou J.-P."/>
            <person name="Szurek B."/>
            <person name="Taconnat L."/>
            <person name="Small I."/>
        </authorList>
    </citation>
    <scope>GENE FAMILY</scope>
</reference>
<reference key="6">
    <citation type="journal article" date="2008" name="PLoS ONE">
        <title>Sorting signals, N-terminal modifications and abundance of the chloroplast proteome.</title>
        <authorList>
            <person name="Zybailov B."/>
            <person name="Rutschow H."/>
            <person name="Friso G."/>
            <person name="Rudella A."/>
            <person name="Emanuelsson O."/>
            <person name="Sun Q."/>
            <person name="van Wijk K.J."/>
        </authorList>
    </citation>
    <scope>IDENTIFICATION BY MASS SPECTROMETRY</scope>
    <scope>SUBCELLULAR LOCATION [LARGE SCALE ANALYSIS]</scope>
</reference>
<reference key="7">
    <citation type="journal article" date="2010" name="Plant Cell">
        <title>MRL1, a conserved Pentatricopeptide repeat protein, is required for stabilization of rbcL mRNA in Chlamydomonas and Arabidopsis.</title>
        <authorList>
            <person name="Johnson X."/>
            <person name="Wostrikoff K."/>
            <person name="Finazzi G."/>
            <person name="Kuras R."/>
            <person name="Schwarz C."/>
            <person name="Bujaldon S."/>
            <person name="Nickelsen J."/>
            <person name="Stern D.B."/>
            <person name="Wollman F.A."/>
            <person name="Vallon O."/>
        </authorList>
    </citation>
    <scope>FUNCTION</scope>
    <scope>TISSUE SPECIFICITY</scope>
    <scope>DISRUPTION PHENOTYPE</scope>
</reference>
<proteinExistence type="evidence at protein level"/>
<protein>
    <recommendedName>
        <fullName>Pentatricopeptide repeat-containing protein MRL1, chloroplastic</fullName>
    </recommendedName>
    <alternativeName>
        <fullName>Protein MATURATION OF RBCL 1</fullName>
        <shortName>AtMRL1</shortName>
    </alternativeName>
</protein>
<comment type="function">
    <text evidence="3">Regulator of the large subunit (LS) of RuBisCO. Involved either in the processing or in the stabilization of the processed transcript, probably by acting as a barrier to the 5'&gt;3' degradation.</text>
</comment>
<comment type="subcellular location">
    <subcellularLocation>
        <location evidence="2">Plastid</location>
        <location evidence="2">Chloroplast</location>
    </subcellularLocation>
</comment>
<comment type="tissue specificity">
    <text evidence="3">Expressed in stems, leaves and sepals.</text>
</comment>
<comment type="disruption phenotype">
    <text evidence="3">No visible phenotype. RuBisCO content only slightly reduced.</text>
</comment>
<comment type="similarity">
    <text evidence="4">Belongs to the PPR family. P subfamily.</text>
</comment>
<comment type="sequence caution" evidence="4">
    <conflict type="erroneous gene model prediction">
        <sequence resource="EMBL-CDS" id="CAB45443"/>
    </conflict>
    <text>Was originally thought to correspond to two different genes At4g34820 and At4g34830.</text>
</comment>
<comment type="sequence caution" evidence="4">
    <conflict type="erroneous gene model prediction">
        <sequence resource="EMBL-CDS" id="CAB45444"/>
    </conflict>
    <text>Was originally thought to correspond to two different genes At4g34820 and At4g34830.</text>
</comment>
<comment type="sequence caution" evidence="4">
    <conflict type="erroneous gene model prediction">
        <sequence resource="EMBL-CDS" id="CAB80199"/>
    </conflict>
    <text>Was originally thought to correspond to two different genes At4g34820 and At4g34830.</text>
</comment>
<comment type="sequence caution" evidence="4">
    <conflict type="erroneous gene model prediction">
        <sequence resource="EMBL-CDS" id="CAB80200"/>
    </conflict>
    <text>Was originally thought to correspond to two different genes At4g34820 and At4g34830.</text>
</comment>
<comment type="online information" name="Pentatricopeptide repeat proteins">
    <link uri="https://ppr.plantenergy.uwa.edu.au"/>
</comment>
<organism>
    <name type="scientific">Arabidopsis thaliana</name>
    <name type="common">Mouse-ear cress</name>
    <dbReference type="NCBI Taxonomy" id="3702"/>
    <lineage>
        <taxon>Eukaryota</taxon>
        <taxon>Viridiplantae</taxon>
        <taxon>Streptophyta</taxon>
        <taxon>Embryophyta</taxon>
        <taxon>Tracheophyta</taxon>
        <taxon>Spermatophyta</taxon>
        <taxon>Magnoliopsida</taxon>
        <taxon>eudicotyledons</taxon>
        <taxon>Gunneridae</taxon>
        <taxon>Pentapetalae</taxon>
        <taxon>rosids</taxon>
        <taxon>malvids</taxon>
        <taxon>Brassicales</taxon>
        <taxon>Brassicaceae</taxon>
        <taxon>Camelineae</taxon>
        <taxon>Arabidopsis</taxon>
    </lineage>
</organism>
<dbReference type="EMBL" id="AL079347">
    <property type="protein sequence ID" value="CAB45443.1"/>
    <property type="status" value="ALT_SEQ"/>
    <property type="molecule type" value="Genomic_DNA"/>
</dbReference>
<dbReference type="EMBL" id="AL079347">
    <property type="protein sequence ID" value="CAB45444.1"/>
    <property type="status" value="ALT_SEQ"/>
    <property type="molecule type" value="Genomic_DNA"/>
</dbReference>
<dbReference type="EMBL" id="AL161586">
    <property type="protein sequence ID" value="CAB80199.1"/>
    <property type="status" value="ALT_SEQ"/>
    <property type="molecule type" value="Genomic_DNA"/>
</dbReference>
<dbReference type="EMBL" id="AL161586">
    <property type="protein sequence ID" value="CAB80200.1"/>
    <property type="status" value="ALT_SEQ"/>
    <property type="molecule type" value="Genomic_DNA"/>
</dbReference>
<dbReference type="EMBL" id="CP002687">
    <property type="protein sequence ID" value="AEE86426.1"/>
    <property type="molecule type" value="Genomic_DNA"/>
</dbReference>
<dbReference type="EMBL" id="AK226737">
    <property type="protein sequence ID" value="BAE98839.1"/>
    <property type="molecule type" value="mRNA"/>
</dbReference>
<dbReference type="EMBL" id="AK230279">
    <property type="protein sequence ID" value="BAF02081.1"/>
    <property type="molecule type" value="mRNA"/>
</dbReference>
<dbReference type="EMBL" id="BT012281">
    <property type="protein sequence ID" value="AAS76768.1"/>
    <property type="molecule type" value="mRNA"/>
</dbReference>
<dbReference type="PIR" id="T10228">
    <property type="entry name" value="T10228"/>
</dbReference>
<dbReference type="PIR" id="T10229">
    <property type="entry name" value="T10229"/>
</dbReference>
<dbReference type="RefSeq" id="NP_195209.2">
    <property type="nucleotide sequence ID" value="NM_119649.5"/>
</dbReference>
<dbReference type="SMR" id="Q0WLC6"/>
<dbReference type="FunCoup" id="Q0WLC6">
    <property type="interactions" value="1598"/>
</dbReference>
<dbReference type="STRING" id="3702.Q0WLC6"/>
<dbReference type="iPTMnet" id="Q0WLC6"/>
<dbReference type="PaxDb" id="3702-AT4G34830.1"/>
<dbReference type="ProteomicsDB" id="249243"/>
<dbReference type="EnsemblPlants" id="AT4G34830.1">
    <property type="protein sequence ID" value="AT4G34830.1"/>
    <property type="gene ID" value="AT4G34830"/>
</dbReference>
<dbReference type="GeneID" id="829635"/>
<dbReference type="Gramene" id="AT4G34830.1">
    <property type="protein sequence ID" value="AT4G34830.1"/>
    <property type="gene ID" value="AT4G34830"/>
</dbReference>
<dbReference type="KEGG" id="ath:AT4G34830"/>
<dbReference type="Araport" id="AT4G34830"/>
<dbReference type="TAIR" id="AT4G34830">
    <property type="gene designation" value="MRL1"/>
</dbReference>
<dbReference type="eggNOG" id="KOG4197">
    <property type="taxonomic scope" value="Eukaryota"/>
</dbReference>
<dbReference type="HOGENOM" id="CLU_009360_0_0_1"/>
<dbReference type="InParanoid" id="Q0WLC6"/>
<dbReference type="OMA" id="CLQMFDN"/>
<dbReference type="PhylomeDB" id="Q0WLC6"/>
<dbReference type="PRO" id="PR:Q0WLC6"/>
<dbReference type="Proteomes" id="UP000006548">
    <property type="component" value="Chromosome 4"/>
</dbReference>
<dbReference type="ExpressionAtlas" id="Q0WLC6">
    <property type="expression patterns" value="baseline and differential"/>
</dbReference>
<dbReference type="GO" id="GO:0009507">
    <property type="term" value="C:chloroplast"/>
    <property type="evidence" value="ECO:0007005"/>
    <property type="project" value="TAIR"/>
</dbReference>
<dbReference type="GO" id="GO:0048255">
    <property type="term" value="P:mRNA stabilization"/>
    <property type="evidence" value="ECO:0000315"/>
    <property type="project" value="TAIR"/>
</dbReference>
<dbReference type="FunFam" id="1.25.40.10:FF:000678">
    <property type="entry name" value="Pentatricopeptide repeat-containing protein MRL1 chloroplastic"/>
    <property type="match status" value="1"/>
</dbReference>
<dbReference type="FunFam" id="1.25.40.10:FF:002179">
    <property type="entry name" value="Pentatricopeptide repeat-containing protein MRL1, chloroplastic"/>
    <property type="match status" value="1"/>
</dbReference>
<dbReference type="FunFam" id="1.25.40.10:FF:000542">
    <property type="entry name" value="Pentatricopeptide repeat-containing protein MRL1, chloroplastic isoform X1"/>
    <property type="match status" value="1"/>
</dbReference>
<dbReference type="Gene3D" id="1.25.40.10">
    <property type="entry name" value="Tetratricopeptide repeat domain"/>
    <property type="match status" value="4"/>
</dbReference>
<dbReference type="InterPro" id="IPR053303">
    <property type="entry name" value="Chloroplast_PPR"/>
</dbReference>
<dbReference type="InterPro" id="IPR002885">
    <property type="entry name" value="Pentatricopeptide_rpt"/>
</dbReference>
<dbReference type="InterPro" id="IPR033443">
    <property type="entry name" value="PROP1-like_PPR_dom"/>
</dbReference>
<dbReference type="InterPro" id="IPR011990">
    <property type="entry name" value="TPR-like_helical_dom_sf"/>
</dbReference>
<dbReference type="NCBIfam" id="TIGR00756">
    <property type="entry name" value="PPR"/>
    <property type="match status" value="8"/>
</dbReference>
<dbReference type="PANTHER" id="PTHR47935">
    <property type="entry name" value="PENTATRICOPEPTIDE REPEAT-CONTAINING PROTEIN MRL1, CHLOROPLASTIC"/>
    <property type="match status" value="1"/>
</dbReference>
<dbReference type="PANTHER" id="PTHR47935:SF1">
    <property type="entry name" value="PENTATRICOPEPTIDE REPEAT-CONTAINING PROTEIN MRL1, CHLOROPLASTIC"/>
    <property type="match status" value="1"/>
</dbReference>
<dbReference type="Pfam" id="PF17177">
    <property type="entry name" value="PPR_long"/>
    <property type="match status" value="2"/>
</dbReference>
<dbReference type="PROSITE" id="PS51375">
    <property type="entry name" value="PPR"/>
    <property type="match status" value="10"/>
</dbReference>
<keyword id="KW-0150">Chloroplast</keyword>
<keyword id="KW-0934">Plastid</keyword>
<keyword id="KW-1185">Reference proteome</keyword>
<keyword id="KW-0677">Repeat</keyword>
<keyword id="KW-0809">Transit peptide</keyword>
<name>PP349_ARATH</name>
<feature type="transit peptide" description="Chloroplast" evidence="1">
    <location>
        <begin position="1"/>
        <end position="72"/>
    </location>
</feature>
<feature type="chain" id="PRO_0000363466" description="Pentatricopeptide repeat-containing protein MRL1, chloroplastic">
    <location>
        <begin position="73"/>
        <end position="1089"/>
    </location>
</feature>
<feature type="repeat" description="PPR 1">
    <location>
        <begin position="466"/>
        <end position="500"/>
    </location>
</feature>
<feature type="repeat" description="PPR 2">
    <location>
        <begin position="501"/>
        <end position="535"/>
    </location>
</feature>
<feature type="repeat" description="PPR 3">
    <location>
        <begin position="536"/>
        <end position="570"/>
    </location>
</feature>
<feature type="repeat" description="PPR 4">
    <location>
        <begin position="571"/>
        <end position="605"/>
    </location>
</feature>
<feature type="repeat" description="PPR 5">
    <location>
        <begin position="608"/>
        <end position="642"/>
    </location>
</feature>
<feature type="repeat" description="PPR 6">
    <location>
        <begin position="643"/>
        <end position="677"/>
    </location>
</feature>
<feature type="repeat" description="PPR 7">
    <location>
        <begin position="678"/>
        <end position="712"/>
    </location>
</feature>
<feature type="repeat" description="PPR 8">
    <location>
        <begin position="713"/>
        <end position="747"/>
    </location>
</feature>
<feature type="repeat" description="PPR 9">
    <location>
        <begin position="748"/>
        <end position="782"/>
    </location>
</feature>
<feature type="repeat" description="PPR 10">
    <location>
        <begin position="783"/>
        <end position="817"/>
    </location>
</feature>
<feature type="sequence conflict" description="In Ref. 3; BAE98839." evidence="4" ref="3">
    <original>E</original>
    <variation>G</variation>
    <location>
        <position position="163"/>
    </location>
</feature>
<feature type="sequence conflict" description="In Ref. 3; BAF02081." evidence="4" ref="3">
    <original>D</original>
    <variation>G</variation>
    <location>
        <position position="195"/>
    </location>
</feature>
<gene>
    <name type="primary">MRL1</name>
    <name type="ordered locus">At4g34830/At4g34820</name>
    <name type="ORF">T11I11.70/T11I11.60</name>
</gene>